<feature type="chain" id="PRO_1000117176" description="Phospho-N-acetylmuramoyl-pentapeptide-transferase">
    <location>
        <begin position="1"/>
        <end position="358"/>
    </location>
</feature>
<feature type="transmembrane region" description="Helical" evidence="1">
    <location>
        <begin position="28"/>
        <end position="48"/>
    </location>
</feature>
<feature type="transmembrane region" description="Helical" evidence="1">
    <location>
        <begin position="70"/>
        <end position="90"/>
    </location>
</feature>
<feature type="transmembrane region" description="Helical" evidence="1">
    <location>
        <begin position="92"/>
        <end position="112"/>
    </location>
</feature>
<feature type="transmembrane region" description="Helical" evidence="1">
    <location>
        <begin position="133"/>
        <end position="153"/>
    </location>
</feature>
<feature type="transmembrane region" description="Helical" evidence="1">
    <location>
        <begin position="165"/>
        <end position="185"/>
    </location>
</feature>
<feature type="transmembrane region" description="Helical" evidence="1">
    <location>
        <begin position="196"/>
        <end position="216"/>
    </location>
</feature>
<feature type="transmembrane region" description="Helical" evidence="1">
    <location>
        <begin position="233"/>
        <end position="253"/>
    </location>
</feature>
<feature type="transmembrane region" description="Helical" evidence="1">
    <location>
        <begin position="260"/>
        <end position="280"/>
    </location>
</feature>
<feature type="transmembrane region" description="Helical" evidence="1">
    <location>
        <begin position="285"/>
        <end position="305"/>
    </location>
</feature>
<feature type="transmembrane region" description="Helical" evidence="1">
    <location>
        <begin position="335"/>
        <end position="355"/>
    </location>
</feature>
<protein>
    <recommendedName>
        <fullName evidence="1">Phospho-N-acetylmuramoyl-pentapeptide-transferase</fullName>
        <ecNumber evidence="1">2.7.8.13</ecNumber>
    </recommendedName>
    <alternativeName>
        <fullName evidence="1">UDP-MurNAc-pentapeptide phosphotransferase</fullName>
    </alternativeName>
</protein>
<reference key="1">
    <citation type="submission" date="2009-01" db="EMBL/GenBank/DDBJ databases">
        <title>Complete sequence of Desulfovibrio desulfuricans subsp. desulfuricans str. ATCC 27774.</title>
        <authorList>
            <consortium name="US DOE Joint Genome Institute"/>
            <person name="Lucas S."/>
            <person name="Copeland A."/>
            <person name="Lapidus A."/>
            <person name="Glavina del Rio T."/>
            <person name="Tice H."/>
            <person name="Bruce D."/>
            <person name="Goodwin L."/>
            <person name="Pitluck S."/>
            <person name="Sims D."/>
            <person name="Lu M."/>
            <person name="Kiss H."/>
            <person name="Meineke L."/>
            <person name="Brettin T."/>
            <person name="Detter J.C."/>
            <person name="Han C."/>
            <person name="Larimer F."/>
            <person name="Land M."/>
            <person name="Hauser L."/>
            <person name="Kyrpides N."/>
            <person name="Ovchinnikova G."/>
            <person name="Hazen T.C."/>
        </authorList>
    </citation>
    <scope>NUCLEOTIDE SEQUENCE [LARGE SCALE GENOMIC DNA]</scope>
    <source>
        <strain>ATCC 27774 / DSM 6949 / MB</strain>
    </source>
</reference>
<organism>
    <name type="scientific">Desulfovibrio desulfuricans (strain ATCC 27774 / DSM 6949 / MB)</name>
    <dbReference type="NCBI Taxonomy" id="525146"/>
    <lineage>
        <taxon>Bacteria</taxon>
        <taxon>Pseudomonadati</taxon>
        <taxon>Thermodesulfobacteriota</taxon>
        <taxon>Desulfovibrionia</taxon>
        <taxon>Desulfovibrionales</taxon>
        <taxon>Desulfovibrionaceae</taxon>
        <taxon>Desulfovibrio</taxon>
    </lineage>
</organism>
<proteinExistence type="inferred from homology"/>
<evidence type="ECO:0000255" key="1">
    <source>
        <dbReference type="HAMAP-Rule" id="MF_00038"/>
    </source>
</evidence>
<comment type="function">
    <text evidence="1">Catalyzes the initial step of the lipid cycle reactions in the biosynthesis of the cell wall peptidoglycan: transfers peptidoglycan precursor phospho-MurNAc-pentapeptide from UDP-MurNAc-pentapeptide onto the lipid carrier undecaprenyl phosphate, yielding undecaprenyl-pyrophosphoryl-MurNAc-pentapeptide, known as lipid I.</text>
</comment>
<comment type="catalytic activity">
    <reaction evidence="1">
        <text>UDP-N-acetyl-alpha-D-muramoyl-L-alanyl-gamma-D-glutamyl-meso-2,6-diaminopimeloyl-D-alanyl-D-alanine + di-trans,octa-cis-undecaprenyl phosphate = di-trans,octa-cis-undecaprenyl diphospho-N-acetyl-alpha-D-muramoyl-L-alanyl-D-glutamyl-meso-2,6-diaminopimeloyl-D-alanyl-D-alanine + UMP</text>
        <dbReference type="Rhea" id="RHEA:28386"/>
        <dbReference type="ChEBI" id="CHEBI:57865"/>
        <dbReference type="ChEBI" id="CHEBI:60392"/>
        <dbReference type="ChEBI" id="CHEBI:61386"/>
        <dbReference type="ChEBI" id="CHEBI:61387"/>
        <dbReference type="EC" id="2.7.8.13"/>
    </reaction>
</comment>
<comment type="cofactor">
    <cofactor evidence="1">
        <name>Mg(2+)</name>
        <dbReference type="ChEBI" id="CHEBI:18420"/>
    </cofactor>
</comment>
<comment type="pathway">
    <text evidence="1">Cell wall biogenesis; peptidoglycan biosynthesis.</text>
</comment>
<comment type="subcellular location">
    <subcellularLocation>
        <location evidence="1">Cell inner membrane</location>
        <topology evidence="1">Multi-pass membrane protein</topology>
    </subcellularLocation>
</comment>
<comment type="similarity">
    <text evidence="1">Belongs to the glycosyltransferase 4 family. MraY subfamily.</text>
</comment>
<dbReference type="EC" id="2.7.8.13" evidence="1"/>
<dbReference type="EMBL" id="CP001358">
    <property type="protein sequence ID" value="ACL49015.1"/>
    <property type="molecule type" value="Genomic_DNA"/>
</dbReference>
<dbReference type="SMR" id="B8IZT8"/>
<dbReference type="STRING" id="525146.Ddes_1110"/>
<dbReference type="KEGG" id="dds:Ddes_1110"/>
<dbReference type="eggNOG" id="COG0472">
    <property type="taxonomic scope" value="Bacteria"/>
</dbReference>
<dbReference type="HOGENOM" id="CLU_023982_0_0_7"/>
<dbReference type="UniPathway" id="UPA00219"/>
<dbReference type="GO" id="GO:0005886">
    <property type="term" value="C:plasma membrane"/>
    <property type="evidence" value="ECO:0007669"/>
    <property type="project" value="UniProtKB-SubCell"/>
</dbReference>
<dbReference type="GO" id="GO:0046872">
    <property type="term" value="F:metal ion binding"/>
    <property type="evidence" value="ECO:0007669"/>
    <property type="project" value="UniProtKB-KW"/>
</dbReference>
<dbReference type="GO" id="GO:0008963">
    <property type="term" value="F:phospho-N-acetylmuramoyl-pentapeptide-transferase activity"/>
    <property type="evidence" value="ECO:0007669"/>
    <property type="project" value="UniProtKB-UniRule"/>
</dbReference>
<dbReference type="GO" id="GO:0051992">
    <property type="term" value="F:UDP-N-acetylmuramoyl-L-alanyl-D-glutamyl-meso-2,6-diaminopimelyl-D-alanyl-D-alanine:undecaprenyl-phosphate transferase activity"/>
    <property type="evidence" value="ECO:0007669"/>
    <property type="project" value="RHEA"/>
</dbReference>
<dbReference type="GO" id="GO:0051301">
    <property type="term" value="P:cell division"/>
    <property type="evidence" value="ECO:0007669"/>
    <property type="project" value="UniProtKB-KW"/>
</dbReference>
<dbReference type="GO" id="GO:0071555">
    <property type="term" value="P:cell wall organization"/>
    <property type="evidence" value="ECO:0007669"/>
    <property type="project" value="UniProtKB-KW"/>
</dbReference>
<dbReference type="GO" id="GO:0009252">
    <property type="term" value="P:peptidoglycan biosynthetic process"/>
    <property type="evidence" value="ECO:0007669"/>
    <property type="project" value="UniProtKB-UniRule"/>
</dbReference>
<dbReference type="GO" id="GO:0008360">
    <property type="term" value="P:regulation of cell shape"/>
    <property type="evidence" value="ECO:0007669"/>
    <property type="project" value="UniProtKB-KW"/>
</dbReference>
<dbReference type="CDD" id="cd06852">
    <property type="entry name" value="GT_MraY"/>
    <property type="match status" value="1"/>
</dbReference>
<dbReference type="HAMAP" id="MF_00038">
    <property type="entry name" value="MraY"/>
    <property type="match status" value="1"/>
</dbReference>
<dbReference type="InterPro" id="IPR000715">
    <property type="entry name" value="Glycosyl_transferase_4"/>
</dbReference>
<dbReference type="InterPro" id="IPR003524">
    <property type="entry name" value="PNAcMuramoyl-5peptid_Trfase"/>
</dbReference>
<dbReference type="InterPro" id="IPR018480">
    <property type="entry name" value="PNAcMuramoyl-5peptid_Trfase_CS"/>
</dbReference>
<dbReference type="NCBIfam" id="TIGR00445">
    <property type="entry name" value="mraY"/>
    <property type="match status" value="1"/>
</dbReference>
<dbReference type="PANTHER" id="PTHR22926">
    <property type="entry name" value="PHOSPHO-N-ACETYLMURAMOYL-PENTAPEPTIDE-TRANSFERASE"/>
    <property type="match status" value="1"/>
</dbReference>
<dbReference type="PANTHER" id="PTHR22926:SF5">
    <property type="entry name" value="PHOSPHO-N-ACETYLMURAMOYL-PENTAPEPTIDE-TRANSFERASE HOMOLOG"/>
    <property type="match status" value="1"/>
</dbReference>
<dbReference type="Pfam" id="PF00953">
    <property type="entry name" value="Glycos_transf_4"/>
    <property type="match status" value="1"/>
</dbReference>
<dbReference type="Pfam" id="PF10555">
    <property type="entry name" value="MraY_sig1"/>
    <property type="match status" value="1"/>
</dbReference>
<dbReference type="PROSITE" id="PS01347">
    <property type="entry name" value="MRAY_1"/>
    <property type="match status" value="1"/>
</dbReference>
<dbReference type="PROSITE" id="PS01348">
    <property type="entry name" value="MRAY_2"/>
    <property type="match status" value="1"/>
</dbReference>
<accession>B8IZT8</accession>
<keyword id="KW-0131">Cell cycle</keyword>
<keyword id="KW-0132">Cell division</keyword>
<keyword id="KW-0997">Cell inner membrane</keyword>
<keyword id="KW-1003">Cell membrane</keyword>
<keyword id="KW-0133">Cell shape</keyword>
<keyword id="KW-0961">Cell wall biogenesis/degradation</keyword>
<keyword id="KW-0460">Magnesium</keyword>
<keyword id="KW-0472">Membrane</keyword>
<keyword id="KW-0479">Metal-binding</keyword>
<keyword id="KW-0573">Peptidoglycan synthesis</keyword>
<keyword id="KW-0808">Transferase</keyword>
<keyword id="KW-0812">Transmembrane</keyword>
<keyword id="KW-1133">Transmembrane helix</keyword>
<gene>
    <name evidence="1" type="primary">mraY</name>
    <name type="ordered locus">Ddes_1110</name>
</gene>
<sequence>MFYNFLSPLASEWTFFNVFRYITFRSMAALMTALLISIILGPRFITWLRRLKCGQYIHEDVAAHACKAGTPTMGGLLMLFSLSVSLLLWADLTNIYIWQAFFVFAGFGAVGFWDDITKLRHHKNRGISGKAKMGGQLAVACVAMLLLFVNPDYSSKLTIPFFKEVTFDLGWFYLPFGVFVMVAASNAVNLTDGLDGLAIGPSIVACIVFSIFIYITGNARFAGYLLVPYMPGVGEVTIFCAALVGAGLGFLWFNAYPAQVFMGDVGSLSIGGVLGYLALLCKQELVLAVVGGLFVAETLSVIVQVGYFRWTGGKRFFRMAPLHHHFELKGVPESKIIIRFWITSILLGLMALSVLKLR</sequence>
<name>MRAY_DESDA</name>